<protein>
    <recommendedName>
        <fullName evidence="1">Probable GTP 3',8-cyclase</fullName>
        <ecNumber evidence="1">4.1.99.22</ecNumber>
    </recommendedName>
    <alternativeName>
        <fullName evidence="1">Molybdenum cofactor biosynthesis protein A</fullName>
    </alternativeName>
</protein>
<gene>
    <name evidence="1" type="primary">moaA</name>
    <name type="ordered locus">MK1540</name>
</gene>
<reference key="1">
    <citation type="journal article" date="2002" name="Proc. Natl. Acad. Sci. U.S.A.">
        <title>The complete genome of hyperthermophile Methanopyrus kandleri AV19 and monophyly of archaeal methanogens.</title>
        <authorList>
            <person name="Slesarev A.I."/>
            <person name="Mezhevaya K.V."/>
            <person name="Makarova K.S."/>
            <person name="Polushin N.N."/>
            <person name="Shcherbinina O.V."/>
            <person name="Shakhova V.V."/>
            <person name="Belova G.I."/>
            <person name="Aravind L."/>
            <person name="Natale D.A."/>
            <person name="Rogozin I.B."/>
            <person name="Tatusov R.L."/>
            <person name="Wolf Y.I."/>
            <person name="Stetter K.O."/>
            <person name="Malykh A.G."/>
            <person name="Koonin E.V."/>
            <person name="Kozyavkin S.A."/>
        </authorList>
    </citation>
    <scope>NUCLEOTIDE SEQUENCE [LARGE SCALE GENOMIC DNA]</scope>
    <source>
        <strain>AV19 / DSM 6324 / JCM 9639 / NBRC 100938</strain>
    </source>
</reference>
<keyword id="KW-0004">4Fe-4S</keyword>
<keyword id="KW-0342">GTP-binding</keyword>
<keyword id="KW-0408">Iron</keyword>
<keyword id="KW-0411">Iron-sulfur</keyword>
<keyword id="KW-0456">Lyase</keyword>
<keyword id="KW-0479">Metal-binding</keyword>
<keyword id="KW-0501">Molybdenum cofactor biosynthesis</keyword>
<keyword id="KW-0547">Nucleotide-binding</keyword>
<keyword id="KW-1185">Reference proteome</keyword>
<keyword id="KW-0949">S-adenosyl-L-methionine</keyword>
<accession>Q8TV60</accession>
<evidence type="ECO:0000255" key="1">
    <source>
        <dbReference type="HAMAP-Rule" id="MF_01225"/>
    </source>
</evidence>
<evidence type="ECO:0000255" key="2">
    <source>
        <dbReference type="PROSITE-ProRule" id="PRU01266"/>
    </source>
</evidence>
<dbReference type="EC" id="4.1.99.22" evidence="1"/>
<dbReference type="EMBL" id="AE009439">
    <property type="protein sequence ID" value="AAM02753.1"/>
    <property type="molecule type" value="Genomic_DNA"/>
</dbReference>
<dbReference type="RefSeq" id="WP_011019908.1">
    <property type="nucleotide sequence ID" value="NC_003551.1"/>
</dbReference>
<dbReference type="SMR" id="Q8TV60"/>
<dbReference type="FunCoup" id="Q8TV60">
    <property type="interactions" value="123"/>
</dbReference>
<dbReference type="STRING" id="190192.MK1540"/>
<dbReference type="PaxDb" id="190192-MK1540"/>
<dbReference type="EnsemblBacteria" id="AAM02753">
    <property type="protein sequence ID" value="AAM02753"/>
    <property type="gene ID" value="MK1540"/>
</dbReference>
<dbReference type="GeneID" id="1478135"/>
<dbReference type="KEGG" id="mka:MK1540"/>
<dbReference type="PATRIC" id="fig|190192.8.peg.1701"/>
<dbReference type="HOGENOM" id="CLU_009273_0_1_2"/>
<dbReference type="InParanoid" id="Q8TV60"/>
<dbReference type="OrthoDB" id="6925at2157"/>
<dbReference type="UniPathway" id="UPA00344"/>
<dbReference type="Proteomes" id="UP000001826">
    <property type="component" value="Chromosome"/>
</dbReference>
<dbReference type="GO" id="GO:0051539">
    <property type="term" value="F:4 iron, 4 sulfur cluster binding"/>
    <property type="evidence" value="ECO:0007669"/>
    <property type="project" value="UniProtKB-UniRule"/>
</dbReference>
<dbReference type="GO" id="GO:0061799">
    <property type="term" value="F:cyclic pyranopterin monophosphate synthase activity"/>
    <property type="evidence" value="ECO:0007669"/>
    <property type="project" value="TreeGrafter"/>
</dbReference>
<dbReference type="GO" id="GO:0061798">
    <property type="term" value="F:GTP 3',8'-cyclase activity"/>
    <property type="evidence" value="ECO:0007669"/>
    <property type="project" value="UniProtKB-UniRule"/>
</dbReference>
<dbReference type="GO" id="GO:0005525">
    <property type="term" value="F:GTP binding"/>
    <property type="evidence" value="ECO:0007669"/>
    <property type="project" value="UniProtKB-UniRule"/>
</dbReference>
<dbReference type="GO" id="GO:0046872">
    <property type="term" value="F:metal ion binding"/>
    <property type="evidence" value="ECO:0007669"/>
    <property type="project" value="UniProtKB-KW"/>
</dbReference>
<dbReference type="GO" id="GO:1904047">
    <property type="term" value="F:S-adenosyl-L-methionine binding"/>
    <property type="evidence" value="ECO:0007669"/>
    <property type="project" value="UniProtKB-UniRule"/>
</dbReference>
<dbReference type="GO" id="GO:0006777">
    <property type="term" value="P:Mo-molybdopterin cofactor biosynthetic process"/>
    <property type="evidence" value="ECO:0007669"/>
    <property type="project" value="UniProtKB-UniRule"/>
</dbReference>
<dbReference type="CDD" id="cd01335">
    <property type="entry name" value="Radical_SAM"/>
    <property type="match status" value="1"/>
</dbReference>
<dbReference type="Gene3D" id="3.20.20.70">
    <property type="entry name" value="Aldolase class I"/>
    <property type="match status" value="1"/>
</dbReference>
<dbReference type="HAMAP" id="MF_01225_A">
    <property type="entry name" value="MoaA_A"/>
    <property type="match status" value="1"/>
</dbReference>
<dbReference type="InterPro" id="IPR013785">
    <property type="entry name" value="Aldolase_TIM"/>
</dbReference>
<dbReference type="InterPro" id="IPR006638">
    <property type="entry name" value="Elp3/MiaA/NifB-like_rSAM"/>
</dbReference>
<dbReference type="InterPro" id="IPR013485">
    <property type="entry name" value="MoaA_arc"/>
</dbReference>
<dbReference type="InterPro" id="IPR010505">
    <property type="entry name" value="MoaA_twitch"/>
</dbReference>
<dbReference type="InterPro" id="IPR050105">
    <property type="entry name" value="MoCo_biosynth_MoaA/MoaC"/>
</dbReference>
<dbReference type="InterPro" id="IPR007197">
    <property type="entry name" value="rSAM"/>
</dbReference>
<dbReference type="NCBIfam" id="TIGR02668">
    <property type="entry name" value="moaA_archaeal"/>
    <property type="match status" value="1"/>
</dbReference>
<dbReference type="NCBIfam" id="NF001199">
    <property type="entry name" value="PRK00164.2-1"/>
    <property type="match status" value="1"/>
</dbReference>
<dbReference type="PANTHER" id="PTHR22960:SF0">
    <property type="entry name" value="MOLYBDENUM COFACTOR BIOSYNTHESIS PROTEIN 1"/>
    <property type="match status" value="1"/>
</dbReference>
<dbReference type="PANTHER" id="PTHR22960">
    <property type="entry name" value="MOLYBDOPTERIN COFACTOR SYNTHESIS PROTEIN A"/>
    <property type="match status" value="1"/>
</dbReference>
<dbReference type="Pfam" id="PF06463">
    <property type="entry name" value="Mob_synth_C"/>
    <property type="match status" value="1"/>
</dbReference>
<dbReference type="Pfam" id="PF04055">
    <property type="entry name" value="Radical_SAM"/>
    <property type="match status" value="1"/>
</dbReference>
<dbReference type="SFLD" id="SFLDG01383">
    <property type="entry name" value="cyclic_pyranopterin_phosphate"/>
    <property type="match status" value="1"/>
</dbReference>
<dbReference type="SFLD" id="SFLDG01072">
    <property type="entry name" value="dehydrogenase_like"/>
    <property type="match status" value="1"/>
</dbReference>
<dbReference type="SMART" id="SM00729">
    <property type="entry name" value="Elp3"/>
    <property type="match status" value="1"/>
</dbReference>
<dbReference type="SUPFAM" id="SSF102114">
    <property type="entry name" value="Radical SAM enzymes"/>
    <property type="match status" value="1"/>
</dbReference>
<dbReference type="PROSITE" id="PS51918">
    <property type="entry name" value="RADICAL_SAM"/>
    <property type="match status" value="1"/>
</dbReference>
<sequence>MRDALGREVRSVRISVTMRCNMACVYCHREGERPGRSELSAAEWGRLLRACAEIGVRKVKITGGEPLLRRDLIEIIENAEGFEEVSLVTNGVLLADYAGDLAEAGLDRVNVSLDTVDRKLYRKLTRSRFSPDDVIRGIEAAVSEGLTPVKVNVVLTSETVKTLPTLVEELADLEGLKLQLIEPMGSIPGFRPAHAEDGLRALGEYEPELERVRTFHSREVYRLNNGMAVEVVKPMDGVMCEACTRIRLTHDGKYKGCLMAPPKPLPRDDFGELVRTLKEYVRTRDDTFEVHQGTSVMGRMRGDVSGR</sequence>
<organism>
    <name type="scientific">Methanopyrus kandleri (strain AV19 / DSM 6324 / JCM 9639 / NBRC 100938)</name>
    <dbReference type="NCBI Taxonomy" id="190192"/>
    <lineage>
        <taxon>Archaea</taxon>
        <taxon>Methanobacteriati</taxon>
        <taxon>Methanobacteriota</taxon>
        <taxon>Methanomada group</taxon>
        <taxon>Methanopyri</taxon>
        <taxon>Methanopyrales</taxon>
        <taxon>Methanopyraceae</taxon>
        <taxon>Methanopyrus</taxon>
    </lineage>
</organism>
<proteinExistence type="inferred from homology"/>
<feature type="chain" id="PRO_0000153018" description="Probable GTP 3',8-cyclase">
    <location>
        <begin position="1"/>
        <end position="307"/>
    </location>
</feature>
<feature type="domain" description="Radical SAM core" evidence="2">
    <location>
        <begin position="4"/>
        <end position="222"/>
    </location>
</feature>
<feature type="binding site" evidence="1">
    <location>
        <position position="13"/>
    </location>
    <ligand>
        <name>GTP</name>
        <dbReference type="ChEBI" id="CHEBI:37565"/>
    </ligand>
</feature>
<feature type="binding site" evidence="1">
    <location>
        <position position="20"/>
    </location>
    <ligand>
        <name>[4Fe-4S] cluster</name>
        <dbReference type="ChEBI" id="CHEBI:49883"/>
        <label>1</label>
        <note>4Fe-4S-S-AdoMet</note>
    </ligand>
</feature>
<feature type="binding site" evidence="1">
    <location>
        <position position="24"/>
    </location>
    <ligand>
        <name>[4Fe-4S] cluster</name>
        <dbReference type="ChEBI" id="CHEBI:49883"/>
        <label>1</label>
        <note>4Fe-4S-S-AdoMet</note>
    </ligand>
</feature>
<feature type="binding site" evidence="1">
    <location>
        <position position="26"/>
    </location>
    <ligand>
        <name>S-adenosyl-L-methionine</name>
        <dbReference type="ChEBI" id="CHEBI:59789"/>
    </ligand>
</feature>
<feature type="binding site" evidence="1">
    <location>
        <position position="27"/>
    </location>
    <ligand>
        <name>[4Fe-4S] cluster</name>
        <dbReference type="ChEBI" id="CHEBI:49883"/>
        <label>1</label>
        <note>4Fe-4S-S-AdoMet</note>
    </ligand>
</feature>
<feature type="binding site" evidence="1">
    <location>
        <position position="60"/>
    </location>
    <ligand>
        <name>GTP</name>
        <dbReference type="ChEBI" id="CHEBI:37565"/>
    </ligand>
</feature>
<feature type="binding site" evidence="1">
    <location>
        <position position="64"/>
    </location>
    <ligand>
        <name>S-adenosyl-L-methionine</name>
        <dbReference type="ChEBI" id="CHEBI:59789"/>
    </ligand>
</feature>
<feature type="binding site" evidence="1">
    <location>
        <position position="112"/>
    </location>
    <ligand>
        <name>S-adenosyl-L-methionine</name>
        <dbReference type="ChEBI" id="CHEBI:59789"/>
    </ligand>
</feature>
<feature type="binding site" evidence="1">
    <location>
        <position position="150"/>
    </location>
    <ligand>
        <name>GTP</name>
        <dbReference type="ChEBI" id="CHEBI:37565"/>
    </ligand>
</feature>
<feature type="binding site" evidence="1">
    <location>
        <position position="240"/>
    </location>
    <ligand>
        <name>[4Fe-4S] cluster</name>
        <dbReference type="ChEBI" id="CHEBI:49883"/>
        <label>2</label>
        <note>4Fe-4S-substrate</note>
    </ligand>
</feature>
<feature type="binding site" evidence="1">
    <location>
        <position position="243"/>
    </location>
    <ligand>
        <name>[4Fe-4S] cluster</name>
        <dbReference type="ChEBI" id="CHEBI:49883"/>
        <label>2</label>
        <note>4Fe-4S-substrate</note>
    </ligand>
</feature>
<feature type="binding site" evidence="1">
    <location>
        <begin position="245"/>
        <end position="247"/>
    </location>
    <ligand>
        <name>GTP</name>
        <dbReference type="ChEBI" id="CHEBI:37565"/>
    </ligand>
</feature>
<feature type="binding site" evidence="1">
    <location>
        <position position="257"/>
    </location>
    <ligand>
        <name>[4Fe-4S] cluster</name>
        <dbReference type="ChEBI" id="CHEBI:49883"/>
        <label>2</label>
        <note>4Fe-4S-substrate</note>
    </ligand>
</feature>
<comment type="function">
    <text evidence="1">Catalyzes the cyclization of GTP to (8S)-3',8-cyclo-7,8-dihydroguanosine 5'-triphosphate.</text>
</comment>
<comment type="catalytic activity">
    <reaction evidence="1">
        <text>GTP + AH2 + S-adenosyl-L-methionine = (8S)-3',8-cyclo-7,8-dihydroguanosine 5'-triphosphate + 5'-deoxyadenosine + L-methionine + A + H(+)</text>
        <dbReference type="Rhea" id="RHEA:49576"/>
        <dbReference type="ChEBI" id="CHEBI:13193"/>
        <dbReference type="ChEBI" id="CHEBI:15378"/>
        <dbReference type="ChEBI" id="CHEBI:17319"/>
        <dbReference type="ChEBI" id="CHEBI:17499"/>
        <dbReference type="ChEBI" id="CHEBI:37565"/>
        <dbReference type="ChEBI" id="CHEBI:57844"/>
        <dbReference type="ChEBI" id="CHEBI:59789"/>
        <dbReference type="ChEBI" id="CHEBI:131766"/>
        <dbReference type="EC" id="4.1.99.22"/>
    </reaction>
</comment>
<comment type="cofactor">
    <cofactor evidence="1">
        <name>[4Fe-4S] cluster</name>
        <dbReference type="ChEBI" id="CHEBI:49883"/>
    </cofactor>
    <text evidence="1">Binds 2 [4Fe-4S] clusters. Binds 1 [4Fe-4S] cluster coordinated with 3 cysteines and an exchangeable S-adenosyl-L-methionine and 1 [4Fe-4S] cluster coordinated with 3 cysteines and the GTP-derived substrate.</text>
</comment>
<comment type="pathway">
    <text evidence="1">Cofactor biosynthesis; molybdopterin biosynthesis.</text>
</comment>
<comment type="similarity">
    <text evidence="1">Belongs to the radical SAM superfamily. MoaA family.</text>
</comment>
<name>MOAA_METKA</name>